<feature type="chain" id="PRO_0000185384" description="Transmembrane channel-like protein 6">
    <location>
        <begin position="1"/>
        <end position="805"/>
    </location>
</feature>
<feature type="topological domain" description="Lumenal" evidence="2">
    <location>
        <begin position="1"/>
        <end position="209"/>
    </location>
</feature>
<feature type="transmembrane region" description="Helical" evidence="2">
    <location>
        <begin position="210"/>
        <end position="230"/>
    </location>
</feature>
<feature type="topological domain" description="Cytoplasmic" evidence="2">
    <location>
        <begin position="231"/>
        <end position="249"/>
    </location>
</feature>
<feature type="transmembrane region" description="Helical" evidence="2">
    <location>
        <begin position="250"/>
        <end position="270"/>
    </location>
</feature>
<feature type="topological domain" description="Lumenal" evidence="2">
    <location>
        <begin position="271"/>
        <end position="338"/>
    </location>
</feature>
<feature type="transmembrane region" description="Helical" evidence="2">
    <location>
        <begin position="339"/>
        <end position="359"/>
    </location>
</feature>
<feature type="topological domain" description="Cytoplasmic" evidence="2">
    <location>
        <begin position="360"/>
        <end position="431"/>
    </location>
</feature>
<feature type="transmembrane region" description="Helical" evidence="2">
    <location>
        <begin position="432"/>
        <end position="452"/>
    </location>
</feature>
<feature type="topological domain" description="Lumenal" evidence="2">
    <location>
        <begin position="453"/>
        <end position="469"/>
    </location>
</feature>
<feature type="transmembrane region" description="Helical" evidence="2">
    <location>
        <begin position="470"/>
        <end position="490"/>
    </location>
</feature>
<feature type="topological domain" description="Cytoplasmic" evidence="2">
    <location>
        <begin position="491"/>
        <end position="505"/>
    </location>
</feature>
<feature type="transmembrane region" description="Helical" evidence="2">
    <location>
        <begin position="506"/>
        <end position="526"/>
    </location>
</feature>
<feature type="topological domain" description="Lumenal" evidence="2">
    <location>
        <begin position="527"/>
        <end position="553"/>
    </location>
</feature>
<feature type="transmembrane region" description="Helical" evidence="2">
    <location>
        <begin position="554"/>
        <end position="574"/>
    </location>
</feature>
<feature type="topological domain" description="Cytoplasmic" evidence="2">
    <location>
        <begin position="575"/>
        <end position="604"/>
    </location>
</feature>
<feature type="transmembrane region" description="Helical" evidence="2">
    <location>
        <begin position="605"/>
        <end position="625"/>
    </location>
</feature>
<feature type="topological domain" description="Lumenal" evidence="2">
    <location>
        <begin position="626"/>
        <end position="650"/>
    </location>
</feature>
<feature type="transmembrane region" description="Helical" evidence="2">
    <location>
        <begin position="651"/>
        <end position="671"/>
    </location>
</feature>
<feature type="topological domain" description="Cytoplasmic" evidence="2">
    <location>
        <begin position="672"/>
        <end position="722"/>
    </location>
</feature>
<feature type="transmembrane region" description="Helical" evidence="2">
    <location>
        <begin position="723"/>
        <end position="743"/>
    </location>
</feature>
<feature type="topological domain" description="Lumenal" evidence="2">
    <location>
        <begin position="744"/>
        <end position="805"/>
    </location>
</feature>
<feature type="region of interest" description="Disordered" evidence="3">
    <location>
        <begin position="1"/>
        <end position="29"/>
    </location>
</feature>
<feature type="region of interest" description="Disordered" evidence="3">
    <location>
        <begin position="778"/>
        <end position="805"/>
    </location>
</feature>
<feature type="modified residue" description="Phosphothreonine" evidence="19">
    <location>
        <position position="89"/>
    </location>
</feature>
<feature type="modified residue" description="Omega-N-methylarginine" evidence="20">
    <location>
        <position position="94"/>
    </location>
</feature>
<feature type="modified residue" description="Phosphothreonine" evidence="19">
    <location>
        <position position="105"/>
    </location>
</feature>
<feature type="glycosylation site" description="N-linked (GlcNAc...) asparagine" evidence="2">
    <location>
        <position position="103"/>
    </location>
</feature>
<feature type="glycosylation site" description="N-linked (GlcNAc...) asparagine" evidence="2">
    <location>
        <position position="312"/>
    </location>
</feature>
<feature type="splice variant" id="VSP_016437" description="In isoform 3." evidence="16">
    <location>
        <begin position="1"/>
        <end position="361"/>
    </location>
</feature>
<feature type="splice variant" id="VSP_016438" description="In isoform 4." evidence="14">
    <location>
        <begin position="1"/>
        <end position="227"/>
    </location>
</feature>
<feature type="splice variant" id="VSP_016439" description="In isoform 2." evidence="12">
    <location>
        <begin position="410"/>
        <end position="760"/>
    </location>
</feature>
<feature type="splice variant" id="VSP_016440" description="In isoform 3." evidence="16">
    <location>
        <begin position="512"/>
        <end position="571"/>
    </location>
</feature>
<feature type="splice variant" id="VSP_016441" description="In isoform 4." evidence="14">
    <original>NLILKLAILGTLC</original>
    <variation>CVAAHENIIWCWS</variation>
    <location>
        <begin position="513"/>
        <end position="525"/>
    </location>
</feature>
<feature type="splice variant" id="VSP_016442" description="In isoform 4." evidence="14">
    <location>
        <begin position="526"/>
        <end position="805"/>
    </location>
</feature>
<feature type="sequence variant" id="VAR_023963" description="In dbSNP:rs2748427." evidence="4">
    <original>W</original>
    <variation>R</variation>
    <location>
        <position position="125"/>
    </location>
</feature>
<feature type="sequence variant" id="VAR_052336" description="In dbSNP:rs12449858." evidence="7">
    <original>L</original>
    <variation>F</variation>
    <location>
        <position position="153"/>
    </location>
</feature>
<feature type="sequence variant" id="VAR_061851" description="In dbSNP:rs34712518.">
    <original>G</original>
    <variation>D</variation>
    <location>
        <position position="191"/>
    </location>
</feature>
<feature type="sequence conflict" description="In Ref. 2; AAP69874." evidence="17" ref="2">
    <original>L</original>
    <variation>P</variation>
    <location>
        <position position="266"/>
    </location>
</feature>
<feature type="sequence conflict" description="In Ref. 6; AAH35648." evidence="17" ref="6">
    <original>QVAF</original>
    <variation>PRVR</variation>
    <location>
        <begin position="274"/>
        <end position="277"/>
    </location>
</feature>
<feature type="sequence conflict" description="In Ref. 2; AAP69874." evidence="17" ref="2">
    <original>D</original>
    <variation>G</variation>
    <location>
        <position position="556"/>
    </location>
</feature>
<reference key="1">
    <citation type="journal article" date="2002" name="Nat. Genet.">
        <title>Mutations in two adjacent novel genes are associated with epidermodysplasia verruciformis.</title>
        <authorList>
            <person name="Ramoz N."/>
            <person name="Rueda L.-A."/>
            <person name="Bouadjar B."/>
            <person name="Montoya L.-S."/>
            <person name="Orth G."/>
            <person name="Favre M."/>
        </authorList>
    </citation>
    <scope>NUCLEOTIDE SEQUENCE [MRNA] (ISOFORMS 1 AND 2)</scope>
    <scope>SUBCELLULAR LOCATION</scope>
    <scope>INVOLVEMENT IN EV1</scope>
    <scope>VARIANT ARG-125</scope>
</reference>
<reference key="2">
    <citation type="journal article" date="2003" name="Genomics">
        <title>Characterization of the transmembrane channel-like (TMC) gene family: functional clues from hearing loss and epidermodysplasia verruciformis.</title>
        <authorList>
            <person name="Kurima K."/>
            <person name="Yang Y."/>
            <person name="Sorber K."/>
            <person name="Griffith A.J."/>
        </authorList>
    </citation>
    <scope>NUCLEOTIDE SEQUENCE [MRNA] (ISOFORM 1)</scope>
    <scope>TISSUE SPECIFICITY</scope>
</reference>
<reference key="3">
    <citation type="submission" date="2005-06" db="EMBL/GenBank/DDBJ databases">
        <authorList>
            <person name="Lin L."/>
            <person name="Nong W."/>
            <person name="Zhou G."/>
            <person name="Ke R."/>
            <person name="Shen C."/>
            <person name="Zhong G."/>
            <person name="Zheng Z."/>
            <person name="Liang M."/>
            <person name="Wen S."/>
            <person name="Li H."/>
            <person name="Yang S."/>
        </authorList>
    </citation>
    <scope>NUCLEOTIDE SEQUENCE [MRNA] (ISOFORM 3)</scope>
    <scope>TISSUE SPECIFICITY</scope>
</reference>
<reference key="4">
    <citation type="journal article" date="2004" name="Nat. Genet.">
        <title>Complete sequencing and characterization of 21,243 full-length human cDNAs.</title>
        <authorList>
            <person name="Ota T."/>
            <person name="Suzuki Y."/>
            <person name="Nishikawa T."/>
            <person name="Otsuki T."/>
            <person name="Sugiyama T."/>
            <person name="Irie R."/>
            <person name="Wakamatsu A."/>
            <person name="Hayashi K."/>
            <person name="Sato H."/>
            <person name="Nagai K."/>
            <person name="Kimura K."/>
            <person name="Makita H."/>
            <person name="Sekine M."/>
            <person name="Obayashi M."/>
            <person name="Nishi T."/>
            <person name="Shibahara T."/>
            <person name="Tanaka T."/>
            <person name="Ishii S."/>
            <person name="Yamamoto J."/>
            <person name="Saito K."/>
            <person name="Kawai Y."/>
            <person name="Isono Y."/>
            <person name="Nakamura Y."/>
            <person name="Nagahari K."/>
            <person name="Murakami K."/>
            <person name="Yasuda T."/>
            <person name="Iwayanagi T."/>
            <person name="Wagatsuma M."/>
            <person name="Shiratori A."/>
            <person name="Sudo H."/>
            <person name="Hosoiri T."/>
            <person name="Kaku Y."/>
            <person name="Kodaira H."/>
            <person name="Kondo H."/>
            <person name="Sugawara M."/>
            <person name="Takahashi M."/>
            <person name="Kanda K."/>
            <person name="Yokoi T."/>
            <person name="Furuya T."/>
            <person name="Kikkawa E."/>
            <person name="Omura Y."/>
            <person name="Abe K."/>
            <person name="Kamihara K."/>
            <person name="Katsuta N."/>
            <person name="Sato K."/>
            <person name="Tanikawa M."/>
            <person name="Yamazaki M."/>
            <person name="Ninomiya K."/>
            <person name="Ishibashi T."/>
            <person name="Yamashita H."/>
            <person name="Murakawa K."/>
            <person name="Fujimori K."/>
            <person name="Tanai H."/>
            <person name="Kimata M."/>
            <person name="Watanabe M."/>
            <person name="Hiraoka S."/>
            <person name="Chiba Y."/>
            <person name="Ishida S."/>
            <person name="Ono Y."/>
            <person name="Takiguchi S."/>
            <person name="Watanabe S."/>
            <person name="Yosida M."/>
            <person name="Hotuta T."/>
            <person name="Kusano J."/>
            <person name="Kanehori K."/>
            <person name="Takahashi-Fujii A."/>
            <person name="Hara H."/>
            <person name="Tanase T.-O."/>
            <person name="Nomura Y."/>
            <person name="Togiya S."/>
            <person name="Komai F."/>
            <person name="Hara R."/>
            <person name="Takeuchi K."/>
            <person name="Arita M."/>
            <person name="Imose N."/>
            <person name="Musashino K."/>
            <person name="Yuuki H."/>
            <person name="Oshima A."/>
            <person name="Sasaki N."/>
            <person name="Aotsuka S."/>
            <person name="Yoshikawa Y."/>
            <person name="Matsunawa H."/>
            <person name="Ichihara T."/>
            <person name="Shiohata N."/>
            <person name="Sano S."/>
            <person name="Moriya S."/>
            <person name="Momiyama H."/>
            <person name="Satoh N."/>
            <person name="Takami S."/>
            <person name="Terashima Y."/>
            <person name="Suzuki O."/>
            <person name="Nakagawa S."/>
            <person name="Senoh A."/>
            <person name="Mizoguchi H."/>
            <person name="Goto Y."/>
            <person name="Shimizu F."/>
            <person name="Wakebe H."/>
            <person name="Hishigaki H."/>
            <person name="Watanabe T."/>
            <person name="Sugiyama A."/>
            <person name="Takemoto M."/>
            <person name="Kawakami B."/>
            <person name="Yamazaki M."/>
            <person name="Watanabe K."/>
            <person name="Kumagai A."/>
            <person name="Itakura S."/>
            <person name="Fukuzumi Y."/>
            <person name="Fujimori Y."/>
            <person name="Komiyama M."/>
            <person name="Tashiro H."/>
            <person name="Tanigami A."/>
            <person name="Fujiwara T."/>
            <person name="Ono T."/>
            <person name="Yamada K."/>
            <person name="Fujii Y."/>
            <person name="Ozaki K."/>
            <person name="Hirao M."/>
            <person name="Ohmori Y."/>
            <person name="Kawabata A."/>
            <person name="Hikiji T."/>
            <person name="Kobatake N."/>
            <person name="Inagaki H."/>
            <person name="Ikema Y."/>
            <person name="Okamoto S."/>
            <person name="Okitani R."/>
            <person name="Kawakami T."/>
            <person name="Noguchi S."/>
            <person name="Itoh T."/>
            <person name="Shigeta K."/>
            <person name="Senba T."/>
            <person name="Matsumura K."/>
            <person name="Nakajima Y."/>
            <person name="Mizuno T."/>
            <person name="Morinaga M."/>
            <person name="Sasaki M."/>
            <person name="Togashi T."/>
            <person name="Oyama M."/>
            <person name="Hata H."/>
            <person name="Watanabe M."/>
            <person name="Komatsu T."/>
            <person name="Mizushima-Sugano J."/>
            <person name="Satoh T."/>
            <person name="Shirai Y."/>
            <person name="Takahashi Y."/>
            <person name="Nakagawa K."/>
            <person name="Okumura K."/>
            <person name="Nagase T."/>
            <person name="Nomura N."/>
            <person name="Kikuchi H."/>
            <person name="Masuho Y."/>
            <person name="Yamashita R."/>
            <person name="Nakai K."/>
            <person name="Yada T."/>
            <person name="Nakamura Y."/>
            <person name="Ohara O."/>
            <person name="Isogai T."/>
            <person name="Sugano S."/>
        </authorList>
    </citation>
    <scope>NUCLEOTIDE SEQUENCE [LARGE SCALE MRNA] (ISOFORM 4)</scope>
</reference>
<reference key="5">
    <citation type="submission" date="2002-01" db="EMBL/GenBank/DDBJ databases">
        <title>The nucleotide sequence of a long cDNA clone isolated from human spleen.</title>
        <authorList>
            <person name="Jikuya H."/>
            <person name="Takano J."/>
            <person name="Nomura N."/>
            <person name="Kikuno R."/>
            <person name="Nagase T."/>
            <person name="Ohara O."/>
        </authorList>
    </citation>
    <scope>NUCLEOTIDE SEQUENCE [LARGE SCALE MRNA] (ISOFORM 1)</scope>
    <source>
        <tissue>Spleen</tissue>
    </source>
</reference>
<reference key="6">
    <citation type="journal article" date="2004" name="Genome Res.">
        <title>The status, quality, and expansion of the NIH full-length cDNA project: the Mammalian Gene Collection (MGC).</title>
        <authorList>
            <consortium name="The MGC Project Team"/>
        </authorList>
    </citation>
    <scope>NUCLEOTIDE SEQUENCE [LARGE SCALE MRNA] (ISOFORM 1)</scope>
    <scope>VARIANT PHE-153</scope>
    <source>
        <tissue>B-cell</tissue>
        <tissue>Brain</tissue>
    </source>
</reference>
<reference key="7">
    <citation type="submission" date="1997-03" db="EMBL/GenBank/DDBJ databases">
        <title>LAK-4 clone from the membrane lymphotoxin expressing subtraction library.</title>
        <authorList>
            <person name="Abe Y."/>
            <person name="Takaoka Y."/>
        </authorList>
    </citation>
    <scope>NUCLEOTIDE SEQUENCE [MRNA] OF 345-805</scope>
    <source>
        <tissue>Lymphoid tissue</tissue>
    </source>
</reference>
<reference key="8">
    <citation type="journal article" date="2004" name="J. Hum. Genet.">
        <title>Novel mutations of EVER1/TMC6 gene in a Japanese patient with epidermodysplasia verruciformis.</title>
        <authorList>
            <person name="Tate G."/>
            <person name="Suzuki T."/>
            <person name="Kishimoto K."/>
            <person name="Mitsuya T."/>
        </authorList>
    </citation>
    <scope>INVOLVEMENT IN EV1</scope>
</reference>
<reference key="9">
    <citation type="journal article" date="2008" name="J. Exp. Med.">
        <title>Regulation of cellular zinc balance as a potential mechanism of EVER-mediated protection against pathogenesis by cutaneous oncogenic human papillomaviruses.</title>
        <authorList>
            <person name="Lazarczyk M."/>
            <person name="Pons C."/>
            <person name="Mendoza J.A."/>
            <person name="Cassonnet P."/>
            <person name="Jacob Y."/>
            <person name="Favre M."/>
        </authorList>
    </citation>
    <scope>FUNCTION</scope>
    <scope>INTERACTION WITH TMC8 AND SLC30A1</scope>
    <scope>INTERACTION WITH HPV (MICROBIAL INFECTION)</scope>
    <scope>SUBCELLULAR LOCATION</scope>
</reference>
<reference key="10">
    <citation type="journal article" date="2013" name="J. Proteome Res.">
        <title>Toward a comprehensive characterization of a human cancer cell phosphoproteome.</title>
        <authorList>
            <person name="Zhou H."/>
            <person name="Di Palma S."/>
            <person name="Preisinger C."/>
            <person name="Peng M."/>
            <person name="Polat A.N."/>
            <person name="Heck A.J."/>
            <person name="Mohammed S."/>
        </authorList>
    </citation>
    <scope>PHOSPHORYLATION [LARGE SCALE ANALYSIS] AT THR-89 AND THR-105</scope>
    <scope>IDENTIFICATION BY MASS SPECTROMETRY [LARGE SCALE ANALYSIS]</scope>
    <source>
        <tissue>Erythroleukemia</tissue>
    </source>
</reference>
<reference key="11">
    <citation type="journal article" date="2014" name="Mol. Cell. Proteomics">
        <title>Immunoaffinity enrichment and mass spectrometry analysis of protein methylation.</title>
        <authorList>
            <person name="Guo A."/>
            <person name="Gu H."/>
            <person name="Zhou J."/>
            <person name="Mulhern D."/>
            <person name="Wang Y."/>
            <person name="Lee K.A."/>
            <person name="Yang V."/>
            <person name="Aguiar M."/>
            <person name="Kornhauser J."/>
            <person name="Jia X."/>
            <person name="Ren J."/>
            <person name="Beausoleil S.A."/>
            <person name="Silva J.C."/>
            <person name="Vemulapalli V."/>
            <person name="Bedford M.T."/>
            <person name="Comb M.J."/>
        </authorList>
    </citation>
    <scope>METHYLATION [LARGE SCALE ANALYSIS] AT ARG-94</scope>
    <scope>IDENTIFICATION BY MASS SPECTROMETRY [LARGE SCALE ANALYSIS]</scope>
    <source>
        <tissue>Colon carcinoma</tissue>
    </source>
</reference>
<reference key="12">
    <citation type="journal article" date="2018" name="J. Exp. Med.">
        <title>The human CIB1-EVER1-EVER2 complex governs keratinocyte-intrinsic immunity to beta-papillomaviruses.</title>
        <authorList>
            <person name="de Jong S.J."/>
            <person name="Crequer A."/>
            <person name="Matos I."/>
            <person name="Hum D."/>
            <person name="Gunasekharan V."/>
            <person name="Lorenzo L."/>
            <person name="Jabot-Hanin F."/>
            <person name="Imahorn E."/>
            <person name="Arias A.A."/>
            <person name="Vahidnezhad H."/>
            <person name="Youssefian L."/>
            <person name="Markle J.G."/>
            <person name="Patin E."/>
            <person name="D'Amico A."/>
            <person name="Wang C.Q.F."/>
            <person name="Full F."/>
            <person name="Ensser A."/>
            <person name="Leisner T.M."/>
            <person name="Parise L.V."/>
            <person name="Bouaziz M."/>
            <person name="Maya N.P."/>
            <person name="Cadena X.R."/>
            <person name="Saka B."/>
            <person name="Saeidian A.H."/>
            <person name="Aghazadeh N."/>
            <person name="Zeinali S."/>
            <person name="Itin P."/>
            <person name="Krueger J.G."/>
            <person name="Laimins L."/>
            <person name="Abel L."/>
            <person name="Fuchs E."/>
            <person name="Uitto J."/>
            <person name="Franco J.L."/>
            <person name="Burger B."/>
            <person name="Orth G."/>
            <person name="Jouanguy E."/>
            <person name="Casanova J.L."/>
        </authorList>
    </citation>
    <scope>FUNCTION</scope>
    <scope>INTERACTION WITH CIB1 AND TMC8</scope>
</reference>
<reference key="13">
    <citation type="journal article" date="2020" name="J. Biol. Chem.">
        <title>Expression of a TMC6-TMC8-CIB1 heterotrimeric complex in lymphocytes is regulated by each of the components.</title>
        <authorList>
            <person name="Wu C.J."/>
            <person name="Li X."/>
            <person name="Sommers C.L."/>
            <person name="Kurima K."/>
            <person name="Huh S."/>
            <person name="Bugos G."/>
            <person name="Dong L."/>
            <person name="Li W."/>
            <person name="Griffith A.J."/>
            <person name="Samelson L.E."/>
        </authorList>
    </citation>
    <scope>FUNCTION</scope>
    <scope>INTERACTION WITH TMC8 AMD CIB1</scope>
</reference>
<keyword id="KW-0025">Alternative splicing</keyword>
<keyword id="KW-0256">Endoplasmic reticulum</keyword>
<keyword id="KW-0325">Glycoprotein</keyword>
<keyword id="KW-0333">Golgi apparatus</keyword>
<keyword id="KW-0472">Membrane</keyword>
<keyword id="KW-0488">Methylation</keyword>
<keyword id="KW-0539">Nucleus</keyword>
<keyword id="KW-0597">Phosphoprotein</keyword>
<keyword id="KW-1267">Proteomics identification</keyword>
<keyword id="KW-1185">Reference proteome</keyword>
<keyword id="KW-0812">Transmembrane</keyword>
<keyword id="KW-1133">Transmembrane helix</keyword>
<name>TMC6_HUMAN</name>
<gene>
    <name evidence="18" type="primary">TMC6</name>
    <name evidence="15" type="synonym">EVER1</name>
    <name type="synonym">EVIN1</name>
</gene>
<proteinExistence type="evidence at protein level"/>
<protein>
    <recommendedName>
        <fullName evidence="13">Transmembrane channel-like protein 6</fullName>
    </recommendedName>
    <alternativeName>
        <fullName>Epidermodysplasia verruciformis protein 1</fullName>
    </alternativeName>
    <alternativeName>
        <fullName>Protein LAK-4</fullName>
    </alternativeName>
</protein>
<organism>
    <name type="scientific">Homo sapiens</name>
    <name type="common">Human</name>
    <dbReference type="NCBI Taxonomy" id="9606"/>
    <lineage>
        <taxon>Eukaryota</taxon>
        <taxon>Metazoa</taxon>
        <taxon>Chordata</taxon>
        <taxon>Craniata</taxon>
        <taxon>Vertebrata</taxon>
        <taxon>Euteleostomi</taxon>
        <taxon>Mammalia</taxon>
        <taxon>Eutheria</taxon>
        <taxon>Euarchontoglires</taxon>
        <taxon>Primates</taxon>
        <taxon>Haplorrhini</taxon>
        <taxon>Catarrhini</taxon>
        <taxon>Hominidae</taxon>
        <taxon>Homo</taxon>
    </lineage>
</organism>
<sequence>MAQPLAFILDVPETPGDQGQGPSPYDESEVHDSFQQLIQEQSQCTAQEGLELQQREREVTGSSQQTLWRPEGTQSTATLRILASMPSRTIGRSRGAIISQYYNRTVQLRCRSSRPLLGNFVRSAWPSLRLYDLELDPTALEEEEKQSLLVKELQSLAVAQRDHMLRGMPLSLAEKRSLREKSRTPRGKWRGQPGSGGVCSCCGRLRYACVLALHSLGLALLSALQALMPWRYALKRIGGQFGSSVLSYFLFLKTLLAFNALLLLLLVAFIMGPQVAFPPALPGPAPVCTGLELLTGAGCFTHTVMYYGHYSNATLNQPCGSPLDGSQCTPRVGGLPYNMPLAYLSTVGVSFFITCITLVYSMAHSFGESYRVGSTSGIHAITVFCSWDYKVTQKRASRLQQDNIRTRLKELLAEWQLRHSPRSVCGRLRQAAVLGLVWLLCLGTALGCAVAVHVFSEFMIQSPEAAGQEAVLLVLPLVVGLLNLGAPYLCRVLAALEPHDSPVLEVYVAICRNLILKLAILGTLCYHWLGRRVGVLQGQCWEDFVGQELYRFLVMDFVLMLLDTLFGELVWRIISEKKLKRRRKPEFDIARNVLELIYGQTLTWLGVLFSPLLPAVQIIKLLLVFYVKKTSLLANCQAPRRPWLASHMSTVFLTLLCFPAFLGAAVFLCYAVWQVKPSSTCGPFRTLDTMYEAGRVWVRHLEAAGPRVSWLPWVHRYLMENTFFVFLVSALLLAVIYLNIQVVRGQRKVICLLKEQISNEGEDKIFLINKLHSIYERKEREERSRVGTTEEAAAPPALLTDEQDA</sequence>
<comment type="function">
    <text evidence="1 8 9 10">Acts as a regulatory protein involved in the regulation of numerous cellular processes (PubMed:18158319, PubMed:30068544, PubMed:32917726). Together with its homolog TMC8/EVER2, forms a complex with CIB1 in lymphocytes and keratynocytes where TMC6 and TMC8 stabilize CIB1 and reciprocally (PubMed:30068544, PubMed:32917726). Together with TMC8, also forms a complex with and activates zinc transporter ZNT1 at the ER membrane of keratynocytes, thereby facilitating zinc uptake into the ER (PubMed:18158319). Down-regulates the activity of transcription factors induced by zinc and cytokines (PubMed:18158319). Also plays a role in thermal sensation by inhibiting the M-channel (KCNQ2-KCNQ3 channel) current in primary sensory neurons (By similarity).</text>
</comment>
<comment type="subunit">
    <text evidence="8 9 10">Interacts with TMC8 (PubMed:32917726). Interacts and forms a complex with TMC8 and CIB1; the interaction stabilizes each component of the complex (PubMed:30068544, PubMed:32917726). Interacts and forms a complex with TMC8 and SLC30A1/ZNT1; the interaction regulates zinc transport into the ER (PubMed:18158319).</text>
</comment>
<comment type="subunit">
    <text evidence="9">(Microbial infection) Interacts with human papillomavirus 16/HPV16 protein E5; the interaction alleviates TMC6-mediated transcription factors inhibition.</text>
</comment>
<comment type="interaction">
    <interactant intactId="EBI-9088037">
        <id>Q7Z403</id>
    </interactant>
    <interactant intactId="EBI-1055254">
        <id>Q8WXH2</id>
        <label>JPH3</label>
    </interactant>
    <organismsDiffer>false</organismsDiffer>
    <experiments>3</experiments>
</comment>
<comment type="interaction">
    <interactant intactId="EBI-9088037">
        <id>Q7Z403</id>
    </interactant>
    <interactant intactId="EBI-716404">
        <id>P16284</id>
        <label>PECAM1</label>
    </interactant>
    <organismsDiffer>false</organismsDiffer>
    <experiments>3</experiments>
</comment>
<comment type="interaction">
    <interactant intactId="EBI-9088037">
        <id>Q7Z403</id>
    </interactant>
    <interactant intactId="EBI-353844">
        <id>P08670</id>
        <label>VIM</label>
    </interactant>
    <organismsDiffer>false</organismsDiffer>
    <experiments>3</experiments>
</comment>
<comment type="interaction">
    <interactant intactId="EBI-9088037">
        <id>Q7Z403</id>
    </interactant>
    <interactant intactId="EBI-2515601">
        <id>Q8N680</id>
        <label>ZBTB2</label>
    </interactant>
    <organismsDiffer>false</organismsDiffer>
    <experiments>3</experiments>
</comment>
<comment type="subcellular location">
    <subcellularLocation>
        <location evidence="4">Endoplasmic reticulum membrane</location>
        <topology evidence="2">Multi-pass membrane protein</topology>
    </subcellularLocation>
    <subcellularLocation>
        <location evidence="8">Golgi apparatus membrane</location>
        <topology evidence="2">Multi-pass membrane protein</topology>
    </subcellularLocation>
    <subcellularLocation>
        <location evidence="8">Nucleus membrane</location>
        <topology evidence="2">Multi-pass membrane protein</topology>
    </subcellularLocation>
    <text evidence="8">Localizes to the ER, Golgi and nucleus membranes in keratinocytes.</text>
</comment>
<comment type="alternative products">
    <event type="alternative splicing"/>
    <isoform>
        <id>Q7Z403-1</id>
        <name>1</name>
        <name>Large EVER1</name>
        <sequence type="displayed"/>
    </isoform>
    <isoform>
        <id>Q7Z403-2</id>
        <name>2</name>
        <name>Small EVER1</name>
        <sequence type="described" ref="VSP_016439"/>
    </isoform>
    <isoform>
        <id>Q7Z403-3</id>
        <name>3</name>
        <sequence type="described" ref="VSP_016437 VSP_016440"/>
    </isoform>
    <isoform>
        <id>Q7Z403-4</id>
        <name>4</name>
        <sequence type="described" ref="VSP_016438 VSP_016441 VSP_016442"/>
    </isoform>
</comment>
<comment type="tissue specificity">
    <text evidence="5 11">Expressed in placenta, prostate, testis, activated T-lymphocytes and lymphokine-activated killer (LAK) lymphocytes.</text>
</comment>
<comment type="disease" evidence="4 6">
    <disease id="DI-01531">
        <name>Epidermodysplasia verruciformis 1</name>
        <acronym>EV1</acronym>
        <description>A form of epidermodysplasia verruciformis, a rare genodermatosis associated with a high risk of skin carcinoma that results from an abnormal susceptibility to infection by specific human papillomaviruses, including the oncogenic HPV5. Infection leads to the early development of disseminated flat wart-like and pityriasis versicolor-like skin lesions. Cutaneous Bowen's carcinomas in situ and invasive squamous cell carcinomas develop in about half of the patients, mainly on sun-exposed skin areas. EV1 inheritance is autosomal recessive.</description>
        <dbReference type="MIM" id="226400"/>
    </disease>
    <text>The disease is caused by variants affecting the gene represented in this entry.</text>
</comment>
<comment type="similarity">
    <text evidence="17">Belongs to the TMC family.</text>
</comment>
<comment type="sequence caution" evidence="17">
    <conflict type="erroneous initiation">
        <sequence resource="EMBL-CDS" id="AAH35648"/>
    </conflict>
</comment>
<comment type="sequence caution" evidence="17">
    <conflict type="erroneous initiation">
        <sequence resource="EMBL-CDS" id="BAA24179"/>
    </conflict>
</comment>
<comment type="sequence caution" evidence="17">
    <conflict type="erroneous initiation">
        <sequence resource="EMBL-CDS" id="BAB84891"/>
    </conflict>
</comment>
<comment type="online information" name="TMC6base">
    <link uri="https://databases.lovd.nl/shared/genes/TMC6"/>
    <text>TMC6 mutation db</text>
</comment>
<accession>Q7Z403</accession>
<accession>O43284</accession>
<accession>Q45VJ2</accession>
<accession>Q8IU98</accession>
<accession>Q8IUI7</accession>
<accession>Q8IWU8</accession>
<accession>Q8TEQ7</accession>
<accession>Q9HAG5</accession>
<evidence type="ECO:0000250" key="1">
    <source>
        <dbReference type="UniProtKB" id="Q7TN60"/>
    </source>
</evidence>
<evidence type="ECO:0000255" key="2"/>
<evidence type="ECO:0000256" key="3">
    <source>
        <dbReference type="SAM" id="MobiDB-lite"/>
    </source>
</evidence>
<evidence type="ECO:0000269" key="4">
    <source>
    </source>
</evidence>
<evidence type="ECO:0000269" key="5">
    <source>
    </source>
</evidence>
<evidence type="ECO:0000269" key="6">
    <source>
    </source>
</evidence>
<evidence type="ECO:0000269" key="7">
    <source>
    </source>
</evidence>
<evidence type="ECO:0000269" key="8">
    <source>
    </source>
</evidence>
<evidence type="ECO:0000269" key="9">
    <source>
    </source>
</evidence>
<evidence type="ECO:0000269" key="10">
    <source>
    </source>
</evidence>
<evidence type="ECO:0000269" key="11">
    <source ref="3"/>
</evidence>
<evidence type="ECO:0000303" key="12">
    <source>
    </source>
</evidence>
<evidence type="ECO:0000303" key="13">
    <source>
    </source>
</evidence>
<evidence type="ECO:0000303" key="14">
    <source>
    </source>
</evidence>
<evidence type="ECO:0000303" key="15">
    <source>
    </source>
</evidence>
<evidence type="ECO:0000303" key="16">
    <source ref="3"/>
</evidence>
<evidence type="ECO:0000305" key="17"/>
<evidence type="ECO:0000312" key="18">
    <source>
        <dbReference type="HGNC" id="HGNC:18021"/>
    </source>
</evidence>
<evidence type="ECO:0007744" key="19">
    <source>
    </source>
</evidence>
<evidence type="ECO:0007744" key="20">
    <source>
    </source>
</evidence>
<dbReference type="EMBL" id="AY057379">
    <property type="protein sequence ID" value="AAL25836.1"/>
    <property type="molecule type" value="mRNA"/>
</dbReference>
<dbReference type="EMBL" id="AY099356">
    <property type="protein sequence ID" value="AAM44452.1"/>
    <property type="molecule type" value="mRNA"/>
</dbReference>
<dbReference type="EMBL" id="AY099357">
    <property type="protein sequence ID" value="AAM44453.1"/>
    <property type="molecule type" value="mRNA"/>
</dbReference>
<dbReference type="EMBL" id="AY236496">
    <property type="protein sequence ID" value="AAP69874.1"/>
    <property type="molecule type" value="mRNA"/>
</dbReference>
<dbReference type="EMBL" id="DQ104440">
    <property type="protein sequence ID" value="AAZ20186.1"/>
    <property type="molecule type" value="mRNA"/>
</dbReference>
<dbReference type="EMBL" id="AK021738">
    <property type="protein sequence ID" value="BAB13884.1"/>
    <property type="molecule type" value="mRNA"/>
</dbReference>
<dbReference type="EMBL" id="AK074065">
    <property type="protein sequence ID" value="BAB84891.1"/>
    <property type="status" value="ALT_INIT"/>
    <property type="molecule type" value="mRNA"/>
</dbReference>
<dbReference type="EMBL" id="BC023597">
    <property type="protein sequence ID" value="AAH23597.1"/>
    <property type="molecule type" value="mRNA"/>
</dbReference>
<dbReference type="EMBL" id="BC035648">
    <property type="protein sequence ID" value="AAH35648.1"/>
    <property type="status" value="ALT_INIT"/>
    <property type="molecule type" value="mRNA"/>
</dbReference>
<dbReference type="EMBL" id="AB002405">
    <property type="protein sequence ID" value="BAA24179.2"/>
    <property type="status" value="ALT_INIT"/>
    <property type="molecule type" value="mRNA"/>
</dbReference>
<dbReference type="CCDS" id="CCDS32748.1">
    <molecule id="Q7Z403-1"/>
</dbReference>
<dbReference type="RefSeq" id="NP_001120670.1">
    <molecule id="Q7Z403-1"/>
    <property type="nucleotide sequence ID" value="NM_001127198.5"/>
</dbReference>
<dbReference type="RefSeq" id="NP_001308114.1">
    <molecule id="Q7Z403-1"/>
    <property type="nucleotide sequence ID" value="NM_001321185.1"/>
</dbReference>
<dbReference type="RefSeq" id="NP_001361525.1">
    <molecule id="Q7Z403-1"/>
    <property type="nucleotide sequence ID" value="NM_001374596.1"/>
</dbReference>
<dbReference type="RefSeq" id="NP_001362282.1">
    <molecule id="Q7Z403-1"/>
    <property type="nucleotide sequence ID" value="NM_001375353.1"/>
</dbReference>
<dbReference type="RefSeq" id="NP_001362283.1">
    <molecule id="Q7Z403-1"/>
    <property type="nucleotide sequence ID" value="NM_001375354.1"/>
</dbReference>
<dbReference type="RefSeq" id="NP_009198.4">
    <molecule id="Q7Z403-1"/>
    <property type="nucleotide sequence ID" value="NM_007267.7"/>
</dbReference>
<dbReference type="RefSeq" id="XP_005257052.1">
    <property type="nucleotide sequence ID" value="XM_005256995.1"/>
</dbReference>
<dbReference type="RefSeq" id="XP_011522557.1">
    <property type="nucleotide sequence ID" value="XM_011524255.1"/>
</dbReference>
<dbReference type="RefSeq" id="XP_024306324.1">
    <molecule id="Q7Z403-1"/>
    <property type="nucleotide sequence ID" value="XM_024450556.2"/>
</dbReference>
<dbReference type="RefSeq" id="XP_047291206.1">
    <molecule id="Q7Z403-1"/>
    <property type="nucleotide sequence ID" value="XM_047435250.1"/>
</dbReference>
<dbReference type="RefSeq" id="XP_047291207.1">
    <molecule id="Q7Z403-1"/>
    <property type="nucleotide sequence ID" value="XM_047435251.1"/>
</dbReference>
<dbReference type="RefSeq" id="XP_047291208.1">
    <molecule id="Q7Z403-1"/>
    <property type="nucleotide sequence ID" value="XM_047435252.1"/>
</dbReference>
<dbReference type="RefSeq" id="XP_047291209.1">
    <molecule id="Q7Z403-1"/>
    <property type="nucleotide sequence ID" value="XM_047435253.1"/>
</dbReference>
<dbReference type="RefSeq" id="XP_047291210.1">
    <molecule id="Q7Z403-1"/>
    <property type="nucleotide sequence ID" value="XM_047435254.1"/>
</dbReference>
<dbReference type="RefSeq" id="XP_047291211.1">
    <molecule id="Q7Z403-1"/>
    <property type="nucleotide sequence ID" value="XM_047435255.1"/>
</dbReference>
<dbReference type="RefSeq" id="XP_047291212.1">
    <molecule id="Q7Z403-1"/>
    <property type="nucleotide sequence ID" value="XM_047435256.1"/>
</dbReference>
<dbReference type="RefSeq" id="XP_054170886.1">
    <molecule id="Q7Z403-1"/>
    <property type="nucleotide sequence ID" value="XM_054314911.1"/>
</dbReference>
<dbReference type="RefSeq" id="XP_054170887.1">
    <molecule id="Q7Z403-1"/>
    <property type="nucleotide sequence ID" value="XM_054314912.1"/>
</dbReference>
<dbReference type="RefSeq" id="XP_054170888.1">
    <molecule id="Q7Z403-1"/>
    <property type="nucleotide sequence ID" value="XM_054314913.1"/>
</dbReference>
<dbReference type="SMR" id="Q7Z403"/>
<dbReference type="BioGRID" id="116453">
    <property type="interactions" value="39"/>
</dbReference>
<dbReference type="FunCoup" id="Q7Z403">
    <property type="interactions" value="392"/>
</dbReference>
<dbReference type="IntAct" id="Q7Z403">
    <property type="interactions" value="27"/>
</dbReference>
<dbReference type="MINT" id="Q7Z403"/>
<dbReference type="STRING" id="9606.ENSP00000465261"/>
<dbReference type="TCDB" id="1.A.17.4.10">
    <property type="family name" value="the calcium-dependent chloride channel (ca-clc) family"/>
</dbReference>
<dbReference type="GlyCosmos" id="Q7Z403">
    <property type="glycosylation" value="2 sites, No reported glycans"/>
</dbReference>
<dbReference type="GlyGen" id="Q7Z403">
    <property type="glycosylation" value="3 sites, 1 N-linked glycan (1 site), 1 O-linked glycan (1 site)"/>
</dbReference>
<dbReference type="iPTMnet" id="Q7Z403"/>
<dbReference type="PhosphoSitePlus" id="Q7Z403"/>
<dbReference type="SwissPalm" id="Q7Z403"/>
<dbReference type="BioMuta" id="TMC6"/>
<dbReference type="DMDM" id="83305925"/>
<dbReference type="jPOST" id="Q7Z403"/>
<dbReference type="MassIVE" id="Q7Z403"/>
<dbReference type="PaxDb" id="9606-ENSP00000465261"/>
<dbReference type="PeptideAtlas" id="Q7Z403"/>
<dbReference type="ProteomicsDB" id="69106">
    <molecule id="Q7Z403-1"/>
</dbReference>
<dbReference type="ProteomicsDB" id="69107">
    <molecule id="Q7Z403-2"/>
</dbReference>
<dbReference type="ProteomicsDB" id="69108">
    <molecule id="Q7Z403-3"/>
</dbReference>
<dbReference type="ProteomicsDB" id="69109">
    <molecule id="Q7Z403-4"/>
</dbReference>
<dbReference type="Pumba" id="Q7Z403"/>
<dbReference type="Antibodypedia" id="32516">
    <property type="antibodies" value="134 antibodies from 21 providers"/>
</dbReference>
<dbReference type="DNASU" id="11322"/>
<dbReference type="Ensembl" id="ENST00000306591.11">
    <molecule id="Q7Z403-2"/>
    <property type="protein sequence ID" value="ENSP00000306405.6"/>
    <property type="gene ID" value="ENSG00000141524.19"/>
</dbReference>
<dbReference type="Ensembl" id="ENST00000322914.7">
    <molecule id="Q7Z403-1"/>
    <property type="protein sequence ID" value="ENSP00000313408.2"/>
    <property type="gene ID" value="ENSG00000141524.19"/>
</dbReference>
<dbReference type="Ensembl" id="ENST00000392467.7">
    <molecule id="Q7Z403-1"/>
    <property type="protein sequence ID" value="ENSP00000376260.2"/>
    <property type="gene ID" value="ENSG00000141524.19"/>
</dbReference>
<dbReference type="Ensembl" id="ENST00000589271.6">
    <molecule id="Q7Z403-1"/>
    <property type="protein sequence ID" value="ENSP00000468255.2"/>
    <property type="gene ID" value="ENSG00000141524.19"/>
</dbReference>
<dbReference type="Ensembl" id="ENST00000590602.6">
    <molecule id="Q7Z403-1"/>
    <property type="protein sequence ID" value="ENSP00000465261.1"/>
    <property type="gene ID" value="ENSG00000141524.19"/>
</dbReference>
<dbReference type="Ensembl" id="ENST00000592063.6">
    <molecule id="Q7Z403-1"/>
    <property type="protein sequence ID" value="ENSP00000466885.2"/>
    <property type="gene ID" value="ENSG00000141524.19"/>
</dbReference>
<dbReference type="Ensembl" id="ENST00000698550.1">
    <molecule id="Q7Z403-1"/>
    <property type="protein sequence ID" value="ENSP00000513793.1"/>
    <property type="gene ID" value="ENSG00000141524.19"/>
</dbReference>
<dbReference type="GeneID" id="11322"/>
<dbReference type="KEGG" id="hsa:11322"/>
<dbReference type="MANE-Select" id="ENST00000590602.6">
    <property type="protein sequence ID" value="ENSP00000465261.1"/>
    <property type="RefSeq nucleotide sequence ID" value="NM_001127198.5"/>
    <property type="RefSeq protein sequence ID" value="NP_001120670.1"/>
</dbReference>
<dbReference type="UCSC" id="uc002jui.2">
    <molecule id="Q7Z403-1"/>
    <property type="organism name" value="human"/>
</dbReference>
<dbReference type="AGR" id="HGNC:18021"/>
<dbReference type="CTD" id="11322"/>
<dbReference type="DisGeNET" id="11322"/>
<dbReference type="GeneCards" id="TMC6"/>
<dbReference type="HGNC" id="HGNC:18021">
    <property type="gene designation" value="TMC6"/>
</dbReference>
<dbReference type="HPA" id="ENSG00000141524">
    <property type="expression patterns" value="Tissue enhanced (brain, lymphoid tissue)"/>
</dbReference>
<dbReference type="MalaCards" id="TMC6"/>
<dbReference type="MIM" id="226400">
    <property type="type" value="phenotype"/>
</dbReference>
<dbReference type="MIM" id="605828">
    <property type="type" value="gene"/>
</dbReference>
<dbReference type="neXtProt" id="NX_Q7Z403"/>
<dbReference type="OpenTargets" id="ENSG00000141524"/>
<dbReference type="Orphanet" id="302">
    <property type="disease" value="Inherited epidermodysplasia verruciformis"/>
</dbReference>
<dbReference type="PharmGKB" id="PA134949466"/>
<dbReference type="VEuPathDB" id="HostDB:ENSG00000141524"/>
<dbReference type="eggNOG" id="KOG1039">
    <property type="taxonomic scope" value="Eukaryota"/>
</dbReference>
<dbReference type="GeneTree" id="ENSGT01050000244894"/>
<dbReference type="HOGENOM" id="CLU_606852_0_0_1"/>
<dbReference type="InParanoid" id="Q7Z403"/>
<dbReference type="OMA" id="FSHTLMY"/>
<dbReference type="OrthoDB" id="1936208at2759"/>
<dbReference type="PAN-GO" id="Q7Z403">
    <property type="GO annotations" value="1 GO annotation based on evolutionary models"/>
</dbReference>
<dbReference type="PhylomeDB" id="Q7Z403"/>
<dbReference type="PathwayCommons" id="Q7Z403"/>
<dbReference type="Reactome" id="R-HSA-6798695">
    <property type="pathway name" value="Neutrophil degranulation"/>
</dbReference>
<dbReference type="SignaLink" id="Q7Z403"/>
<dbReference type="BioGRID-ORCS" id="11322">
    <property type="hits" value="14 hits in 1153 CRISPR screens"/>
</dbReference>
<dbReference type="ChiTaRS" id="TMC6">
    <property type="organism name" value="human"/>
</dbReference>
<dbReference type="GeneWiki" id="TMC6"/>
<dbReference type="GenomeRNAi" id="11322"/>
<dbReference type="Pharos" id="Q7Z403">
    <property type="development level" value="Tbio"/>
</dbReference>
<dbReference type="PRO" id="PR:Q7Z403"/>
<dbReference type="Proteomes" id="UP000005640">
    <property type="component" value="Chromosome 17"/>
</dbReference>
<dbReference type="RNAct" id="Q7Z403">
    <property type="molecule type" value="protein"/>
</dbReference>
<dbReference type="Bgee" id="ENSG00000141524">
    <property type="expression patterns" value="Expressed in granulocyte and 190 other cell types or tissues"/>
</dbReference>
<dbReference type="ExpressionAtlas" id="Q7Z403">
    <property type="expression patterns" value="baseline and differential"/>
</dbReference>
<dbReference type="GO" id="GO:0005737">
    <property type="term" value="C:cytoplasm"/>
    <property type="evidence" value="ECO:0000314"/>
    <property type="project" value="UniProtKB"/>
</dbReference>
<dbReference type="GO" id="GO:0005783">
    <property type="term" value="C:endoplasmic reticulum"/>
    <property type="evidence" value="ECO:0000314"/>
    <property type="project" value="UniProtKB"/>
</dbReference>
<dbReference type="GO" id="GO:0005789">
    <property type="term" value="C:endoplasmic reticulum membrane"/>
    <property type="evidence" value="ECO:0007669"/>
    <property type="project" value="UniProtKB-SubCell"/>
</dbReference>
<dbReference type="GO" id="GO:0070062">
    <property type="term" value="C:extracellular exosome"/>
    <property type="evidence" value="ECO:0007005"/>
    <property type="project" value="UniProtKB"/>
</dbReference>
<dbReference type="GO" id="GO:0005794">
    <property type="term" value="C:Golgi apparatus"/>
    <property type="evidence" value="ECO:0000314"/>
    <property type="project" value="UniProtKB"/>
</dbReference>
<dbReference type="GO" id="GO:0000139">
    <property type="term" value="C:Golgi membrane"/>
    <property type="evidence" value="ECO:0007669"/>
    <property type="project" value="UniProtKB-SubCell"/>
</dbReference>
<dbReference type="GO" id="GO:0031965">
    <property type="term" value="C:nuclear membrane"/>
    <property type="evidence" value="ECO:0000314"/>
    <property type="project" value="UniProtKB"/>
</dbReference>
<dbReference type="GO" id="GO:0005886">
    <property type="term" value="C:plasma membrane"/>
    <property type="evidence" value="ECO:0000304"/>
    <property type="project" value="Reactome"/>
</dbReference>
<dbReference type="GO" id="GO:0035579">
    <property type="term" value="C:specific granule membrane"/>
    <property type="evidence" value="ECO:0000304"/>
    <property type="project" value="Reactome"/>
</dbReference>
<dbReference type="GO" id="GO:0070821">
    <property type="term" value="C:tertiary granule membrane"/>
    <property type="evidence" value="ECO:0000304"/>
    <property type="project" value="Reactome"/>
</dbReference>
<dbReference type="GO" id="GO:0008381">
    <property type="term" value="F:mechanosensitive monoatomic ion channel activity"/>
    <property type="evidence" value="ECO:0000318"/>
    <property type="project" value="GO_Central"/>
</dbReference>
<dbReference type="GO" id="GO:0006882">
    <property type="term" value="P:intracellular zinc ion homeostasis"/>
    <property type="evidence" value="ECO:0000314"/>
    <property type="project" value="UniProtKB"/>
</dbReference>
<dbReference type="GO" id="GO:0050821">
    <property type="term" value="P:protein stabilization"/>
    <property type="evidence" value="ECO:0000315"/>
    <property type="project" value="UniProtKB"/>
</dbReference>
<dbReference type="InterPro" id="IPR038900">
    <property type="entry name" value="TMC"/>
</dbReference>
<dbReference type="InterPro" id="IPR012496">
    <property type="entry name" value="TMC_dom"/>
</dbReference>
<dbReference type="PANTHER" id="PTHR23302:SF4">
    <property type="entry name" value="TRANSMEMBRANE CHANNEL-LIKE PROTEIN 6"/>
    <property type="match status" value="1"/>
</dbReference>
<dbReference type="PANTHER" id="PTHR23302">
    <property type="entry name" value="TRANSMEMBRANE CHANNEL-RELATED"/>
    <property type="match status" value="1"/>
</dbReference>
<dbReference type="Pfam" id="PF07810">
    <property type="entry name" value="TMC"/>
    <property type="match status" value="1"/>
</dbReference>